<reference key="1">
    <citation type="journal article" date="2003" name="Proc. Natl. Acad. Sci. U.S.A.">
        <title>Genome sequence of the cyanobacterium Prochlorococcus marinus SS120, a nearly minimal oxyphototrophic genome.</title>
        <authorList>
            <person name="Dufresne A."/>
            <person name="Salanoubat M."/>
            <person name="Partensky F."/>
            <person name="Artiguenave F."/>
            <person name="Axmann I.M."/>
            <person name="Barbe V."/>
            <person name="Duprat S."/>
            <person name="Galperin M.Y."/>
            <person name="Koonin E.V."/>
            <person name="Le Gall F."/>
            <person name="Makarova K.S."/>
            <person name="Ostrowski M."/>
            <person name="Oztas S."/>
            <person name="Robert C."/>
            <person name="Rogozin I.B."/>
            <person name="Scanlan D.J."/>
            <person name="Tandeau de Marsac N."/>
            <person name="Weissenbach J."/>
            <person name="Wincker P."/>
            <person name="Wolf Y.I."/>
            <person name="Hess W.R."/>
        </authorList>
    </citation>
    <scope>NUCLEOTIDE SEQUENCE [LARGE SCALE GENOMIC DNA]</scope>
    <source>
        <strain>SARG / CCMP1375 / SS120</strain>
    </source>
</reference>
<dbReference type="EMBL" id="AE017126">
    <property type="protein sequence ID" value="AAQ00842.1"/>
    <property type="molecule type" value="Genomic_DNA"/>
</dbReference>
<dbReference type="RefSeq" id="NP_876189.1">
    <property type="nucleotide sequence ID" value="NC_005042.1"/>
</dbReference>
<dbReference type="RefSeq" id="WP_011125947.1">
    <property type="nucleotide sequence ID" value="NC_005042.1"/>
</dbReference>
<dbReference type="SMR" id="Q7V9N2"/>
<dbReference type="STRING" id="167539.Pro_1798"/>
<dbReference type="EnsemblBacteria" id="AAQ00842">
    <property type="protein sequence ID" value="AAQ00842"/>
    <property type="gene ID" value="Pro_1798"/>
</dbReference>
<dbReference type="KEGG" id="pma:Pro_1798"/>
<dbReference type="PATRIC" id="fig|167539.5.peg.1900"/>
<dbReference type="eggNOG" id="COG0290">
    <property type="taxonomic scope" value="Bacteria"/>
</dbReference>
<dbReference type="HOGENOM" id="CLU_054919_3_2_3"/>
<dbReference type="OrthoDB" id="9806014at2"/>
<dbReference type="Proteomes" id="UP000001420">
    <property type="component" value="Chromosome"/>
</dbReference>
<dbReference type="GO" id="GO:0005829">
    <property type="term" value="C:cytosol"/>
    <property type="evidence" value="ECO:0007669"/>
    <property type="project" value="TreeGrafter"/>
</dbReference>
<dbReference type="GO" id="GO:0016020">
    <property type="term" value="C:membrane"/>
    <property type="evidence" value="ECO:0007669"/>
    <property type="project" value="TreeGrafter"/>
</dbReference>
<dbReference type="GO" id="GO:0043022">
    <property type="term" value="F:ribosome binding"/>
    <property type="evidence" value="ECO:0007669"/>
    <property type="project" value="TreeGrafter"/>
</dbReference>
<dbReference type="GO" id="GO:0003743">
    <property type="term" value="F:translation initiation factor activity"/>
    <property type="evidence" value="ECO:0007669"/>
    <property type="project" value="UniProtKB-UniRule"/>
</dbReference>
<dbReference type="GO" id="GO:0032790">
    <property type="term" value="P:ribosome disassembly"/>
    <property type="evidence" value="ECO:0007669"/>
    <property type="project" value="TreeGrafter"/>
</dbReference>
<dbReference type="FunFam" id="3.10.20.80:FF:000001">
    <property type="entry name" value="Translation initiation factor IF-3"/>
    <property type="match status" value="1"/>
</dbReference>
<dbReference type="FunFam" id="3.30.110.10:FF:000001">
    <property type="entry name" value="Translation initiation factor IF-3"/>
    <property type="match status" value="1"/>
</dbReference>
<dbReference type="Gene3D" id="3.30.110.10">
    <property type="entry name" value="Translation initiation factor 3 (IF-3), C-terminal domain"/>
    <property type="match status" value="1"/>
</dbReference>
<dbReference type="Gene3D" id="3.10.20.80">
    <property type="entry name" value="Translation initiation factor 3 (IF-3), N-terminal domain"/>
    <property type="match status" value="1"/>
</dbReference>
<dbReference type="HAMAP" id="MF_00080">
    <property type="entry name" value="IF_3"/>
    <property type="match status" value="1"/>
</dbReference>
<dbReference type="InterPro" id="IPR036788">
    <property type="entry name" value="T_IF-3_C_sf"/>
</dbReference>
<dbReference type="InterPro" id="IPR036787">
    <property type="entry name" value="T_IF-3_N_sf"/>
</dbReference>
<dbReference type="InterPro" id="IPR019813">
    <property type="entry name" value="Translation_initiation_fac3_CS"/>
</dbReference>
<dbReference type="InterPro" id="IPR001288">
    <property type="entry name" value="Translation_initiation_fac_3"/>
</dbReference>
<dbReference type="InterPro" id="IPR019815">
    <property type="entry name" value="Translation_initiation_fac_3_C"/>
</dbReference>
<dbReference type="InterPro" id="IPR019814">
    <property type="entry name" value="Translation_initiation_fac_3_N"/>
</dbReference>
<dbReference type="NCBIfam" id="TIGR00168">
    <property type="entry name" value="infC"/>
    <property type="match status" value="1"/>
</dbReference>
<dbReference type="PANTHER" id="PTHR10938">
    <property type="entry name" value="TRANSLATION INITIATION FACTOR IF-3"/>
    <property type="match status" value="1"/>
</dbReference>
<dbReference type="PANTHER" id="PTHR10938:SF0">
    <property type="entry name" value="TRANSLATION INITIATION FACTOR IF-3, MITOCHONDRIAL"/>
    <property type="match status" value="1"/>
</dbReference>
<dbReference type="Pfam" id="PF00707">
    <property type="entry name" value="IF3_C"/>
    <property type="match status" value="1"/>
</dbReference>
<dbReference type="Pfam" id="PF05198">
    <property type="entry name" value="IF3_N"/>
    <property type="match status" value="1"/>
</dbReference>
<dbReference type="SUPFAM" id="SSF55200">
    <property type="entry name" value="Translation initiation factor IF3, C-terminal domain"/>
    <property type="match status" value="1"/>
</dbReference>
<dbReference type="SUPFAM" id="SSF54364">
    <property type="entry name" value="Translation initiation factor IF3, N-terminal domain"/>
    <property type="match status" value="1"/>
</dbReference>
<dbReference type="PROSITE" id="PS00938">
    <property type="entry name" value="IF3"/>
    <property type="match status" value="1"/>
</dbReference>
<feature type="chain" id="PRO_0000177553" description="Translation initiation factor IF-3">
    <location>
        <begin position="1"/>
        <end position="201"/>
    </location>
</feature>
<comment type="function">
    <text evidence="1">IF-3 binds to the 30S ribosomal subunit and shifts the equilibrium between 70S ribosomes and their 50S and 30S subunits in favor of the free subunits, thus enhancing the availability of 30S subunits on which protein synthesis initiation begins.</text>
</comment>
<comment type="subunit">
    <text evidence="1">Monomer.</text>
</comment>
<comment type="subcellular location">
    <subcellularLocation>
        <location evidence="1">Cytoplasm</location>
    </subcellularLocation>
</comment>
<comment type="similarity">
    <text evidence="1">Belongs to the IF-3 family.</text>
</comment>
<evidence type="ECO:0000255" key="1">
    <source>
        <dbReference type="HAMAP-Rule" id="MF_00080"/>
    </source>
</evidence>
<organism>
    <name type="scientific">Prochlorococcus marinus (strain SARG / CCMP1375 / SS120)</name>
    <dbReference type="NCBI Taxonomy" id="167539"/>
    <lineage>
        <taxon>Bacteria</taxon>
        <taxon>Bacillati</taxon>
        <taxon>Cyanobacteriota</taxon>
        <taxon>Cyanophyceae</taxon>
        <taxon>Synechococcales</taxon>
        <taxon>Prochlorococcaceae</taxon>
        <taxon>Prochlorococcus</taxon>
    </lineage>
</organism>
<name>IF3_PROMA</name>
<accession>Q7V9N2</accession>
<gene>
    <name evidence="1" type="primary">infC</name>
    <name type="ordered locus">Pro_1798</name>
</gene>
<keyword id="KW-0963">Cytoplasm</keyword>
<keyword id="KW-0396">Initiation factor</keyword>
<keyword id="KW-0648">Protein biosynthesis</keyword>
<keyword id="KW-1185">Reference proteome</keyword>
<protein>
    <recommendedName>
        <fullName evidence="1">Translation initiation factor IF-3</fullName>
    </recommendedName>
</protein>
<sequence>MPPRPRFDRRAPVRELPNINERIKYPKLRVVDADGTQLGIISREEALDVAQDRELDLVLVSEKADPPVCRIMNYGKFKFEQEKKAKEAKKKSHQTEVKEVKMRYKIDEHDYQVRIGQATRFLKAGDKVKCTVIFRGREIQHTNLAESLLARMAKDLEEPAEVQQAPKREGRNMIMFLTPRKTPLIKKEQELEEASKAKRTI</sequence>
<proteinExistence type="inferred from homology"/>